<evidence type="ECO:0000269" key="1">
    <source>
    </source>
</evidence>
<evidence type="ECO:0000305" key="2"/>
<sequence>APDWSKIPAREITVFHAGATSFEWIGSEHPGASIVKAGQPCIICHETKKGLDYTAKKLAPREPDAQAMPKTVSFPVSVQAAVEKGTLNVRLSFKPPADSKTGSDADNELKAAIMLLDIKVPQAKLAGCWTSCHKDMRGMPGGDAKKGKYVSAGSFELLQWKSGKTSAALPAGVKVESGKDGDRTTVTFSRKLGGAVVEGRSVPFGIAIHANRAAGRMHYVSLGYRLGIGGAPGEVQAAKQ</sequence>
<keyword id="KW-0903">Direct protein sequencing</keyword>
<keyword id="KW-0249">Electron transport</keyword>
<keyword id="KW-0349">Heme</keyword>
<keyword id="KW-0408">Iron</keyword>
<keyword id="KW-0479">Metal-binding</keyword>
<keyword id="KW-0677">Repeat</keyword>
<keyword id="KW-0813">Transport</keyword>
<reference evidence="2" key="1">
    <citation type="journal article" date="2000" name="Arch. Biochem. Biophys.">
        <title>Primary structure characterization of a Rhodocyclus tenuis diheme cytochrome c reveals the existence of two different classes of low-potential diheme cytochromes c in purple phototropic bacteria.</title>
        <authorList>
            <person name="Devreese B."/>
            <person name="Brige A."/>
            <person name="Backers K."/>
            <person name="Van Driessche G."/>
            <person name="Meyer T.E."/>
            <person name="Cusanovich M.A."/>
            <person name="Van Beeumen J.J."/>
        </authorList>
    </citation>
    <scope>PROTEIN SEQUENCE</scope>
    <scope>HEME-BINDING</scope>
    <scope>MASS SPECTROMETRY</scope>
    <source>
        <strain>DSM 3761</strain>
    </source>
</reference>
<dbReference type="SMR" id="P83170"/>
<dbReference type="GO" id="GO:0020037">
    <property type="term" value="F:heme binding"/>
    <property type="evidence" value="ECO:0007669"/>
    <property type="project" value="InterPro"/>
</dbReference>
<dbReference type="GO" id="GO:0046872">
    <property type="term" value="F:metal ion binding"/>
    <property type="evidence" value="ECO:0007669"/>
    <property type="project" value="UniProtKB-KW"/>
</dbReference>
<dbReference type="InterPro" id="IPR019020">
    <property type="entry name" value="Cyt-c552/DMSO_Rdtase_haem-bd"/>
</dbReference>
<dbReference type="Pfam" id="PF09459">
    <property type="entry name" value="EB_dh"/>
    <property type="match status" value="1"/>
</dbReference>
<dbReference type="SMART" id="SM00887">
    <property type="entry name" value="EB_dh"/>
    <property type="match status" value="1"/>
</dbReference>
<accession>P83170</accession>
<proteinExistence type="evidence at protein level"/>
<protein>
    <recommendedName>
        <fullName>Cytochrome c-551</fullName>
    </recommendedName>
</protein>
<name>C551_RHOTE</name>
<feature type="chain" id="PRO_0000108420" description="Cytochrome c-551">
    <location>
        <begin position="1"/>
        <end position="240"/>
    </location>
</feature>
<feature type="binding site" description="covalent">
    <location>
        <position position="41"/>
    </location>
    <ligand>
        <name>heme c</name>
        <dbReference type="ChEBI" id="CHEBI:61717"/>
        <label>1</label>
    </ligand>
</feature>
<feature type="binding site" description="covalent">
    <location>
        <position position="44"/>
    </location>
    <ligand>
        <name>heme c</name>
        <dbReference type="ChEBI" id="CHEBI:61717"/>
        <label>1</label>
    </ligand>
</feature>
<feature type="binding site" description="axial binding residue" evidence="2">
    <location>
        <position position="45"/>
    </location>
    <ligand>
        <name>heme c</name>
        <dbReference type="ChEBI" id="CHEBI:61717"/>
        <label>1</label>
    </ligand>
    <ligandPart>
        <name>Fe</name>
        <dbReference type="ChEBI" id="CHEBI:18248"/>
    </ligandPart>
</feature>
<feature type="binding site" description="covalent">
    <location>
        <position position="128"/>
    </location>
    <ligand>
        <name>heme c</name>
        <dbReference type="ChEBI" id="CHEBI:61717"/>
        <label>2</label>
    </ligand>
</feature>
<feature type="binding site" description="covalent">
    <location>
        <position position="132"/>
    </location>
    <ligand>
        <name>heme c</name>
        <dbReference type="ChEBI" id="CHEBI:61717"/>
        <label>2</label>
    </ligand>
</feature>
<feature type="binding site" description="axial binding residue" evidence="2">
    <location>
        <position position="133"/>
    </location>
    <ligand>
        <name>heme c</name>
        <dbReference type="ChEBI" id="CHEBI:61717"/>
        <label>2</label>
    </ligand>
    <ligandPart>
        <name>Fe</name>
        <dbReference type="ChEBI" id="CHEBI:18248"/>
    </ligandPart>
</feature>
<organism evidence="2">
    <name type="scientific">Rhodocyclus tenuis</name>
    <name type="common">Rhodospirillum tenue</name>
    <dbReference type="NCBI Taxonomy" id="1066"/>
    <lineage>
        <taxon>Bacteria</taxon>
        <taxon>Pseudomonadati</taxon>
        <taxon>Pseudomonadota</taxon>
        <taxon>Betaproteobacteria</taxon>
        <taxon>Rhodocyclales</taxon>
        <taxon>Rhodocyclaceae</taxon>
        <taxon>Rhodocyclus</taxon>
    </lineage>
</organism>
<comment type="PTM">
    <text>Binds 2 heme c groups per subunit.</text>
</comment>
<comment type="mass spectrometry"/>
<comment type="miscellaneous">
    <text>The second heme binding site has an unusual CXXXCH motif.</text>
</comment>